<keyword id="KW-0067">ATP-binding</keyword>
<keyword id="KW-0418">Kinase</keyword>
<keyword id="KW-0460">Magnesium</keyword>
<keyword id="KW-0547">Nucleotide-binding</keyword>
<keyword id="KW-0723">Serine/threonine-protein kinase</keyword>
<keyword id="KW-0808">Transferase</keyword>
<keyword id="KW-0843">Virulence</keyword>
<dbReference type="EC" id="2.7.11.24" evidence="8"/>
<dbReference type="EMBL" id="AF020316">
    <property type="protein sequence ID" value="AAC63682.1"/>
    <property type="molecule type" value="Genomic_DNA"/>
</dbReference>
<dbReference type="SMR" id="O13352"/>
<dbReference type="OMA" id="MDIPRPE"/>
<dbReference type="PHI-base" id="PHI:113"/>
<dbReference type="GO" id="GO:0005737">
    <property type="term" value="C:cytoplasm"/>
    <property type="evidence" value="ECO:0007669"/>
    <property type="project" value="EnsemblFungi"/>
</dbReference>
<dbReference type="GO" id="GO:0005634">
    <property type="term" value="C:nucleus"/>
    <property type="evidence" value="ECO:0007669"/>
    <property type="project" value="EnsemblFungi"/>
</dbReference>
<dbReference type="GO" id="GO:0005524">
    <property type="term" value="F:ATP binding"/>
    <property type="evidence" value="ECO:0007669"/>
    <property type="project" value="UniProtKB-KW"/>
</dbReference>
<dbReference type="GO" id="GO:0004707">
    <property type="term" value="F:MAP kinase activity"/>
    <property type="evidence" value="ECO:0007669"/>
    <property type="project" value="UniProtKB-EC"/>
</dbReference>
<dbReference type="GO" id="GO:0000196">
    <property type="term" value="P:cell integrity MAPK cascade"/>
    <property type="evidence" value="ECO:0007669"/>
    <property type="project" value="EnsemblFungi"/>
</dbReference>
<dbReference type="GO" id="GO:1902660">
    <property type="term" value="P:negative regulation of glucose mediated signaling pathway"/>
    <property type="evidence" value="ECO:0007669"/>
    <property type="project" value="EnsemblFungi"/>
</dbReference>
<dbReference type="GO" id="GO:1902413">
    <property type="term" value="P:negative regulation of mitotic cytokinesis"/>
    <property type="evidence" value="ECO:0007669"/>
    <property type="project" value="EnsemblFungi"/>
</dbReference>
<dbReference type="GO" id="GO:1905665">
    <property type="term" value="P:positive regulation of calcium ion import across plasma membrane"/>
    <property type="evidence" value="ECO:0007669"/>
    <property type="project" value="EnsemblFungi"/>
</dbReference>
<dbReference type="GO" id="GO:0050850">
    <property type="term" value="P:positive regulation of calcium-mediated signaling"/>
    <property type="evidence" value="ECO:0007669"/>
    <property type="project" value="EnsemblFungi"/>
</dbReference>
<dbReference type="GO" id="GO:0051094">
    <property type="term" value="P:positive regulation of developmental process"/>
    <property type="evidence" value="ECO:0007669"/>
    <property type="project" value="UniProtKB-ARBA"/>
</dbReference>
<dbReference type="GO" id="GO:0032995">
    <property type="term" value="P:regulation of fungal-type cell wall biogenesis"/>
    <property type="evidence" value="ECO:0007669"/>
    <property type="project" value="EnsemblFungi"/>
</dbReference>
<dbReference type="CDD" id="cd07857">
    <property type="entry name" value="STKc_MPK1"/>
    <property type="match status" value="1"/>
</dbReference>
<dbReference type="FunFam" id="1.10.510.10:FF:000013">
    <property type="entry name" value="Mitogen-activated protein kinase"/>
    <property type="match status" value="1"/>
</dbReference>
<dbReference type="FunFam" id="3.30.200.20:FF:000157">
    <property type="entry name" value="Mitogen-activated protein kinase"/>
    <property type="match status" value="1"/>
</dbReference>
<dbReference type="Gene3D" id="3.30.200.20">
    <property type="entry name" value="Phosphorylase Kinase, domain 1"/>
    <property type="match status" value="1"/>
</dbReference>
<dbReference type="Gene3D" id="1.10.510.10">
    <property type="entry name" value="Transferase(Phosphotransferase) domain 1"/>
    <property type="match status" value="1"/>
</dbReference>
<dbReference type="InterPro" id="IPR011009">
    <property type="entry name" value="Kinase-like_dom_sf"/>
</dbReference>
<dbReference type="InterPro" id="IPR050117">
    <property type="entry name" value="MAP_kinase"/>
</dbReference>
<dbReference type="InterPro" id="IPR003527">
    <property type="entry name" value="MAP_kinase_CS"/>
</dbReference>
<dbReference type="InterPro" id="IPR000719">
    <property type="entry name" value="Prot_kinase_dom"/>
</dbReference>
<dbReference type="InterPro" id="IPR017441">
    <property type="entry name" value="Protein_kinase_ATP_BS"/>
</dbReference>
<dbReference type="InterPro" id="IPR008271">
    <property type="entry name" value="Ser/Thr_kinase_AS"/>
</dbReference>
<dbReference type="PANTHER" id="PTHR24055">
    <property type="entry name" value="MITOGEN-ACTIVATED PROTEIN KINASE"/>
    <property type="match status" value="1"/>
</dbReference>
<dbReference type="Pfam" id="PF00069">
    <property type="entry name" value="Pkinase"/>
    <property type="match status" value="1"/>
</dbReference>
<dbReference type="SMART" id="SM00220">
    <property type="entry name" value="S_TKc"/>
    <property type="match status" value="1"/>
</dbReference>
<dbReference type="SUPFAM" id="SSF56112">
    <property type="entry name" value="Protein kinase-like (PK-like)"/>
    <property type="match status" value="1"/>
</dbReference>
<dbReference type="PROSITE" id="PS01351">
    <property type="entry name" value="MAPK"/>
    <property type="match status" value="1"/>
</dbReference>
<dbReference type="PROSITE" id="PS00107">
    <property type="entry name" value="PROTEIN_KINASE_ATP"/>
    <property type="match status" value="1"/>
</dbReference>
<dbReference type="PROSITE" id="PS50011">
    <property type="entry name" value="PROTEIN_KINASE_DOM"/>
    <property type="match status" value="1"/>
</dbReference>
<dbReference type="PROSITE" id="PS00108">
    <property type="entry name" value="PROTEIN_KINASE_ST"/>
    <property type="match status" value="1"/>
</dbReference>
<protein>
    <recommendedName>
        <fullName evidence="9">Mitogen-activated protein kinase MPS1</fullName>
        <shortName evidence="9">MAPK MPS1</shortName>
        <ecNumber evidence="8">2.7.11.24</ecNumber>
    </recommendedName>
</protein>
<proteinExistence type="evidence at protein level"/>
<sequence length="415" mass="46993">MSDLQGRKIFKVFNQDFIVDERYTVTKELGQGAYGIVCAAVNNQTSEGVAIKKVTNVFSKKILAKRALREIKLLQHFRGHRNITCLYDMDIPRPDNFNETYLYEELMECDLAAIIRSGQPLTDAHFQSFIYQILCGLKYIHSANVLHRDLKPGNLLVNADCELKICDFGLARGFSVDPEENAGYMTEYVATRWYRAPEIMLSFQSYTKAIDVWSVGCILAELLGGRPFFKGRDYVDQLNQILHILGTPNEETLSRIGSPRAQEYVRNLPFMAKKPFPTLFPNANPDALDLLDRMLAFDPSSRISVEQALEHPYLHIWHDASDEPDCPTTFNFDFEVVEDVGEMRKMILDEVYRFRQLVRTAPGAGGHGAPHAPQVPIPAGAGQGQWKAEDPRPQEYVGQMNDLEAELAGGLDQRR</sequence>
<gene>
    <name type="primary">MPS1</name>
    <name type="ORF">PgNI_01373</name>
</gene>
<name>MPS1_PYROR</name>
<reference key="1">
    <citation type="journal article" date="1998" name="Proc. Natl. Acad. Sci. U.S.A.">
        <title>Inactivation of the mitogen-activated protein kinase Mps1 from the rice blast fungus prevents penetration of host cells but allows activation of plant defense responses.</title>
        <authorList>
            <person name="Xu J.R."/>
            <person name="Staiger C.J."/>
            <person name="Hamer J.E."/>
        </authorList>
    </citation>
    <scope>NUCLEOTIDE SEQUENCE [GENOMIC DNA]</scope>
    <scope>FUNCTION</scope>
    <scope>DISRUPTION PHENOTYPE</scope>
    <source>
        <strain>Guyane 11</strain>
    </source>
</reference>
<reference key="2">
    <citation type="journal article" date="2019" name="Mol. Biol. Evol.">
        <title>Blast fungal genomes show frequent chromosomal changes, gene gains and losses, and effector gene turnover.</title>
        <authorList>
            <person name="Gomez Luciano L.B."/>
            <person name="Tsai I.J."/>
            <person name="Chuma I."/>
            <person name="Tosa Y."/>
            <person name="Chen Y.H."/>
            <person name="Li J.Y."/>
            <person name="Li M.Y."/>
            <person name="Lu M.J."/>
            <person name="Nakayashiki H."/>
            <person name="Li W.H."/>
        </authorList>
    </citation>
    <scope>NUCLEOTIDE SEQUENCE [GENOMIC DNA]</scope>
    <source>
        <strain>NI907</strain>
    </source>
</reference>
<reference key="3">
    <citation type="journal article" date="2008" name="Eukaryot. Cell">
        <title>MADS-box transcription factor mig1 is required for infectious growth in Magnaporthe grisea.</title>
        <authorList>
            <person name="Mehrabi R."/>
            <person name="Ding S."/>
            <person name="Xu J.R."/>
        </authorList>
    </citation>
    <scope>FUNCTION</scope>
    <scope>INTERACTION WITH MIG1</scope>
</reference>
<reference key="4">
    <citation type="journal article" date="2012" name="Mol. Plant Pathol.">
        <title>MoSwi6, an APSES family transcription factor, interacts with MoMps1 and is required for hyphal and conidial morphogenesis, appressorial function and pathogenicity of Magnaporthe oryzae.</title>
        <authorList>
            <person name="Qi Z."/>
            <person name="Wang Q."/>
            <person name="Dou X."/>
            <person name="Wang W."/>
            <person name="Zhao Q."/>
            <person name="Lv R."/>
            <person name="Zhang H."/>
            <person name="Zheng X."/>
            <person name="Wang P."/>
            <person name="Zhang Z."/>
        </authorList>
    </citation>
    <scope>FUNCTION</scope>
    <scope>INTERACTION WITH SWI6</scope>
</reference>
<reference key="5">
    <citation type="journal article" date="2017" name="Environ. Microbiol.">
        <title>Expression of HopAI interferes with MAP kinase signalling in Magnaporthe oryzae.</title>
        <authorList>
            <person name="Zhang X."/>
            <person name="Liu W."/>
            <person name="Li Y."/>
            <person name="Li G."/>
            <person name="Xu J.R."/>
        </authorList>
    </citation>
    <scope>FUNCTION</scope>
</reference>
<reference key="6">
    <citation type="journal article" date="2017" name="Sci. Rep.">
        <title>The glycogen synthase kinase MoGsk1, regulated by Mps1 MAP kinase, is required for fungal development and pathogenicity in Magnaporthe oryzae.</title>
        <authorList>
            <person name="Zhou T."/>
            <person name="Dagdas Y.F."/>
            <person name="Zhu X."/>
            <person name="Zheng S."/>
            <person name="Chen L."/>
            <person name="Cartwright Z."/>
            <person name="Talbot N.J."/>
            <person name="Wang Z."/>
        </authorList>
    </citation>
    <scope>FUNCTION</scope>
    <scope>DISRUPTION PHENOTYPE</scope>
</reference>
<reference key="7">
    <citation type="journal article" date="2020" name="Sci. Rep.">
        <title>Publisher correction: The glycogen synthase kinase MoGsk1, regulated by Mps1 MAP kinase, is required for fungal development and pathogenicity in Magnaporthe oryzae.</title>
        <authorList>
            <person name="Zhou T."/>
            <person name="Dagdas Y.F."/>
            <person name="Zhu X."/>
            <person name="Zheng S."/>
            <person name="Chen L."/>
            <person name="Cartwright Z."/>
            <person name="Talbot N.J."/>
            <person name="Wang Z."/>
        </authorList>
    </citation>
    <scope>ERRATUM OF PUBMED:28424497</scope>
</reference>
<accession>O13352</accession>
<comment type="function">
    <text evidence="4 5 6 7 8">Mitogen-activated protein kinase; part of the MCK1-MKK2-MPS1 MAP kinase (MAPK) signal transduction cascade that is essential for cell wall integrity and plant infection, but not for plant defense responses (PubMed:18344407, PubMed:22321443, PubMed:28424497, PubMed:28799700, PubMed:9770551). Beside its role in pathogenesis, the MPS1 cascade is active in conidiation and cellular stress responses (PubMed:9770551). Targets downstream of the MPS1-MAPK pathway include transcription factors MIG1 and SWI6, as well as GSK1 and MPG1 (PubMed:18344407, PubMed:22321443, PubMed:28424497).</text>
</comment>
<comment type="catalytic activity">
    <reaction evidence="11">
        <text>L-seryl-[protein] + ATP = O-phospho-L-seryl-[protein] + ADP + H(+)</text>
        <dbReference type="Rhea" id="RHEA:17989"/>
        <dbReference type="Rhea" id="RHEA-COMP:9863"/>
        <dbReference type="Rhea" id="RHEA-COMP:11604"/>
        <dbReference type="ChEBI" id="CHEBI:15378"/>
        <dbReference type="ChEBI" id="CHEBI:29999"/>
        <dbReference type="ChEBI" id="CHEBI:30616"/>
        <dbReference type="ChEBI" id="CHEBI:83421"/>
        <dbReference type="ChEBI" id="CHEBI:456216"/>
        <dbReference type="EC" id="2.7.11.24"/>
    </reaction>
    <physiologicalReaction direction="left-to-right" evidence="11">
        <dbReference type="Rhea" id="RHEA:17990"/>
    </physiologicalReaction>
</comment>
<comment type="catalytic activity">
    <reaction evidence="11">
        <text>L-threonyl-[protein] + ATP = O-phospho-L-threonyl-[protein] + ADP + H(+)</text>
        <dbReference type="Rhea" id="RHEA:46608"/>
        <dbReference type="Rhea" id="RHEA-COMP:11060"/>
        <dbReference type="Rhea" id="RHEA-COMP:11605"/>
        <dbReference type="ChEBI" id="CHEBI:15378"/>
        <dbReference type="ChEBI" id="CHEBI:30013"/>
        <dbReference type="ChEBI" id="CHEBI:30616"/>
        <dbReference type="ChEBI" id="CHEBI:61977"/>
        <dbReference type="ChEBI" id="CHEBI:456216"/>
        <dbReference type="EC" id="2.7.11.24"/>
    </reaction>
    <physiologicalReaction direction="left-to-right" evidence="11">
        <dbReference type="Rhea" id="RHEA:46609"/>
    </physiologicalReaction>
</comment>
<comment type="cofactor">
    <cofactor evidence="2">
        <name>Mg(2+)</name>
        <dbReference type="ChEBI" id="CHEBI:18420"/>
    </cofactor>
</comment>
<comment type="subunit">
    <text evidence="4 5">Interacts with transcription factor MIG1 (PubMed:18344407). Interacts with transcription factor SWI6 (PubMed:22321443).</text>
</comment>
<comment type="disruption phenotype">
    <text evidence="6 8">Leads to sensitivity to cell-wall-digesting enzymes, as well as reduced sporulation and fertility (PubMed:9770551). Abolishes pathogenicity by blocking the penetration of appressoria into plant cell surfaces (PubMed:9770551). Does not affect the ability to trigger early plant-cell defense responses (PubMed:9770551). Affects the expression of MPG1 and GSK1 (PubMed:28424497).</text>
</comment>
<comment type="similarity">
    <text evidence="10">Belongs to the protein kinase superfamily. Ser/Thr protein kinase family. MAP kinase subfamily.</text>
</comment>
<organism>
    <name type="scientific">Pyricularia oryzae</name>
    <name type="common">Rice blast fungus</name>
    <name type="synonym">Magnaporthe oryzae</name>
    <dbReference type="NCBI Taxonomy" id="318829"/>
    <lineage>
        <taxon>Eukaryota</taxon>
        <taxon>Fungi</taxon>
        <taxon>Dikarya</taxon>
        <taxon>Ascomycota</taxon>
        <taxon>Pezizomycotina</taxon>
        <taxon>Sordariomycetes</taxon>
        <taxon>Sordariomycetidae</taxon>
        <taxon>Magnaporthales</taxon>
        <taxon>Pyriculariaceae</taxon>
        <taxon>Pyricularia</taxon>
    </lineage>
</organism>
<feature type="chain" id="PRO_0000453094" description="Mitogen-activated protein kinase MPS1">
    <location>
        <begin position="1"/>
        <end position="415"/>
    </location>
</feature>
<feature type="domain" description="Protein kinase" evidence="1">
    <location>
        <begin position="23"/>
        <end position="314"/>
    </location>
</feature>
<feature type="region of interest" description="Disordered" evidence="3">
    <location>
        <begin position="363"/>
        <end position="394"/>
    </location>
</feature>
<feature type="binding site" evidence="1">
    <location>
        <begin position="29"/>
        <end position="37"/>
    </location>
    <ligand>
        <name>ATP</name>
        <dbReference type="ChEBI" id="CHEBI:30616"/>
    </ligand>
</feature>
<feature type="binding site" evidence="1">
    <location>
        <position position="52"/>
    </location>
    <ligand>
        <name>ATP</name>
        <dbReference type="ChEBI" id="CHEBI:30616"/>
    </ligand>
</feature>
<evidence type="ECO:0000255" key="1">
    <source>
        <dbReference type="PROSITE-ProRule" id="PRU00159"/>
    </source>
</evidence>
<evidence type="ECO:0000255" key="2">
    <source>
        <dbReference type="RuleBase" id="RU361165"/>
    </source>
</evidence>
<evidence type="ECO:0000256" key="3">
    <source>
        <dbReference type="SAM" id="MobiDB-lite"/>
    </source>
</evidence>
<evidence type="ECO:0000269" key="4">
    <source>
    </source>
</evidence>
<evidence type="ECO:0000269" key="5">
    <source>
    </source>
</evidence>
<evidence type="ECO:0000269" key="6">
    <source>
    </source>
</evidence>
<evidence type="ECO:0000269" key="7">
    <source>
    </source>
</evidence>
<evidence type="ECO:0000269" key="8">
    <source>
    </source>
</evidence>
<evidence type="ECO:0000303" key="9">
    <source>
    </source>
</evidence>
<evidence type="ECO:0000305" key="10"/>
<evidence type="ECO:0000305" key="11">
    <source>
    </source>
</evidence>